<sequence>MRHSLPYHILRKRPMKLSTTVILMVSAVLFSVLLVVHLIYFSQISDMTRDGLANKALAVARTLADSPEIRQGLQKKPQESGIQAIAEAVRKRNDLLFIVVTDMQSLRYSHPEAQRIGQPFKGDDILNALNGEENVAINRGFLAQALRVFTPIYDENHKQIGVVAIGLELSRVTQQINDSRWSIIWSVLFGMLVGLIGTCILVKVLKKILFGLEPYEISTLFEQRQAMLQSIKEGVVAVDDRGEVTLINDAAQELLNYRKSQDDEKLSTLSHSWSQVVDVSEVLRDGTPRRDEEITIKDRLLLINTVPVRSNGVIIGAISTFRDKTEVRKLMQRLDGLVNYADALRERSHEFMNKLHVILGLLHLKSYKQLEDYILKTANNYQEEIGSLLGKIKSPVIAGFLISKINRATDLGHTLILNSESQLPDSGSEDQVATLITTLGNLIENALEALGPEPGGEISVTLHYRHGWLHCEVNDDGPGIAPDKIDHIFDKGVSTKGSERGVGLALVKQQVENLGGSIAVESEPGIFTQFFVQIPWDGERSNR</sequence>
<feature type="chain" id="PRO_0000074753" description="Sensor histidine kinase DcuS">
    <location>
        <begin position="1"/>
        <end position="543"/>
    </location>
</feature>
<feature type="topological domain" description="Cytoplasmic" evidence="1">
    <location>
        <begin position="1"/>
        <end position="20"/>
    </location>
</feature>
<feature type="transmembrane region" description="Helical" evidence="2">
    <location>
        <begin position="21"/>
        <end position="41"/>
    </location>
</feature>
<feature type="topological domain" description="Periplasmic" evidence="1">
    <location>
        <begin position="42"/>
        <end position="181"/>
    </location>
</feature>
<feature type="transmembrane region" description="Helical" evidence="2">
    <location>
        <begin position="182"/>
        <end position="202"/>
    </location>
</feature>
<feature type="topological domain" description="Cytoplasmic" evidence="1">
    <location>
        <begin position="203"/>
        <end position="543"/>
    </location>
</feature>
<feature type="domain" description="PAS" evidence="4">
    <location>
        <begin position="212"/>
        <end position="323"/>
    </location>
</feature>
<feature type="domain" description="Histidine kinase" evidence="3">
    <location>
        <begin position="346"/>
        <end position="538"/>
    </location>
</feature>
<feature type="binding site" evidence="1">
    <location>
        <begin position="107"/>
        <end position="110"/>
    </location>
    <ligand>
        <name>(R)-malate</name>
        <dbReference type="ChEBI" id="CHEBI:15588"/>
    </ligand>
</feature>
<feature type="binding site" evidence="1">
    <location>
        <position position="121"/>
    </location>
    <ligand>
        <name>(R)-malate</name>
        <dbReference type="ChEBI" id="CHEBI:15588"/>
    </ligand>
</feature>
<feature type="binding site" evidence="1">
    <location>
        <begin position="140"/>
        <end position="142"/>
    </location>
    <ligand>
        <name>(R)-malate</name>
        <dbReference type="ChEBI" id="CHEBI:15588"/>
    </ligand>
</feature>
<feature type="binding site" evidence="1">
    <location>
        <position position="147"/>
    </location>
    <ligand>
        <name>(R)-malate</name>
        <dbReference type="ChEBI" id="CHEBI:15588"/>
    </ligand>
</feature>
<feature type="modified residue" description="Phosphohistidine; by autocatalysis" evidence="3">
    <location>
        <position position="349"/>
    </location>
</feature>
<gene>
    <name type="primary">dcuS</name>
    <name type="ordered locus">SF4098</name>
    <name type="ordered locus">S3632</name>
</gene>
<evidence type="ECO:0000250" key="1">
    <source>
        <dbReference type="UniProtKB" id="P0AEC8"/>
    </source>
</evidence>
<evidence type="ECO:0000255" key="2"/>
<evidence type="ECO:0000255" key="3">
    <source>
        <dbReference type="PROSITE-ProRule" id="PRU00107"/>
    </source>
</evidence>
<evidence type="ECO:0000255" key="4">
    <source>
        <dbReference type="PROSITE-ProRule" id="PRU00140"/>
    </source>
</evidence>
<accession>P59341</accession>
<dbReference type="EC" id="2.7.13.3" evidence="1"/>
<dbReference type="EMBL" id="AE005674">
    <property type="protein sequence ID" value="AAN45523.1"/>
    <property type="molecule type" value="Genomic_DNA"/>
</dbReference>
<dbReference type="EMBL" id="AE014073">
    <property type="protein sequence ID" value="AAP18676.1"/>
    <property type="molecule type" value="Genomic_DNA"/>
</dbReference>
<dbReference type="RefSeq" id="WP_001216446.1">
    <property type="nucleotide sequence ID" value="NZ_WPGW01000256.1"/>
</dbReference>
<dbReference type="BMRB" id="P59341"/>
<dbReference type="SMR" id="P59341"/>
<dbReference type="STRING" id="198214.SF4098"/>
<dbReference type="PaxDb" id="198214-SF4098"/>
<dbReference type="KEGG" id="sfl:SF4098"/>
<dbReference type="KEGG" id="sfx:S3632"/>
<dbReference type="PATRIC" id="fig|198214.7.peg.4832"/>
<dbReference type="HOGENOM" id="CLU_020211_11_2_6"/>
<dbReference type="BRENDA" id="2.7.13.3">
    <property type="organism ID" value="5712"/>
</dbReference>
<dbReference type="Proteomes" id="UP000001006">
    <property type="component" value="Chromosome"/>
</dbReference>
<dbReference type="Proteomes" id="UP000002673">
    <property type="component" value="Chromosome"/>
</dbReference>
<dbReference type="GO" id="GO:0005886">
    <property type="term" value="C:plasma membrane"/>
    <property type="evidence" value="ECO:0007669"/>
    <property type="project" value="UniProtKB-SubCell"/>
</dbReference>
<dbReference type="GO" id="GO:0005524">
    <property type="term" value="F:ATP binding"/>
    <property type="evidence" value="ECO:0007669"/>
    <property type="project" value="UniProtKB-KW"/>
</dbReference>
<dbReference type="GO" id="GO:0000155">
    <property type="term" value="F:phosphorelay sensor kinase activity"/>
    <property type="evidence" value="ECO:0007669"/>
    <property type="project" value="InterPro"/>
</dbReference>
<dbReference type="GO" id="GO:0006355">
    <property type="term" value="P:regulation of DNA-templated transcription"/>
    <property type="evidence" value="ECO:0007669"/>
    <property type="project" value="InterPro"/>
</dbReference>
<dbReference type="CDD" id="cd16915">
    <property type="entry name" value="HATPase_DpiB-CitA-like"/>
    <property type="match status" value="1"/>
</dbReference>
<dbReference type="CDD" id="cd00130">
    <property type="entry name" value="PAS"/>
    <property type="match status" value="1"/>
</dbReference>
<dbReference type="FunFam" id="1.10.287.130:FF:000011">
    <property type="entry name" value="Sensor histidine kinase DcuS"/>
    <property type="match status" value="1"/>
</dbReference>
<dbReference type="FunFam" id="3.30.450.20:FF:000018">
    <property type="entry name" value="Sensor histidine kinase DcuS"/>
    <property type="match status" value="1"/>
</dbReference>
<dbReference type="FunFam" id="3.30.450.20:FF:000045">
    <property type="entry name" value="Sensor histidine kinase DcuS"/>
    <property type="match status" value="1"/>
</dbReference>
<dbReference type="FunFam" id="3.30.565.10:FF:000041">
    <property type="entry name" value="Sensor histidine kinase DcuS"/>
    <property type="match status" value="1"/>
</dbReference>
<dbReference type="Gene3D" id="1.10.287.130">
    <property type="match status" value="1"/>
</dbReference>
<dbReference type="Gene3D" id="3.30.565.10">
    <property type="entry name" value="Histidine kinase-like ATPase, C-terminal domain"/>
    <property type="match status" value="1"/>
</dbReference>
<dbReference type="Gene3D" id="3.30.450.20">
    <property type="entry name" value="PAS domain"/>
    <property type="match status" value="2"/>
</dbReference>
<dbReference type="InterPro" id="IPR036890">
    <property type="entry name" value="HATPase_C_sf"/>
</dbReference>
<dbReference type="InterPro" id="IPR005467">
    <property type="entry name" value="His_kinase_dom"/>
</dbReference>
<dbReference type="InterPro" id="IPR000014">
    <property type="entry name" value="PAS"/>
</dbReference>
<dbReference type="InterPro" id="IPR035965">
    <property type="entry name" value="PAS-like_dom_sf"/>
</dbReference>
<dbReference type="InterPro" id="IPR013767">
    <property type="entry name" value="PAS_fold"/>
</dbReference>
<dbReference type="InterPro" id="IPR033463">
    <property type="entry name" value="sCache_3"/>
</dbReference>
<dbReference type="InterPro" id="IPR029151">
    <property type="entry name" value="Sensor-like_sf"/>
</dbReference>
<dbReference type="InterPro" id="IPR004358">
    <property type="entry name" value="Sig_transdc_His_kin-like_C"/>
</dbReference>
<dbReference type="InterPro" id="IPR016120">
    <property type="entry name" value="Sig_transdc_His_kin_SpoOB"/>
</dbReference>
<dbReference type="InterPro" id="IPR039506">
    <property type="entry name" value="SPOB_a"/>
</dbReference>
<dbReference type="NCBIfam" id="NF008298">
    <property type="entry name" value="PRK11086.1"/>
    <property type="match status" value="1"/>
</dbReference>
<dbReference type="PANTHER" id="PTHR43547:SF10">
    <property type="entry name" value="SENSOR HISTIDINE KINASE DCUS"/>
    <property type="match status" value="1"/>
</dbReference>
<dbReference type="PANTHER" id="PTHR43547">
    <property type="entry name" value="TWO-COMPONENT HISTIDINE KINASE"/>
    <property type="match status" value="1"/>
</dbReference>
<dbReference type="Pfam" id="PF02518">
    <property type="entry name" value="HATPase_c"/>
    <property type="match status" value="1"/>
</dbReference>
<dbReference type="Pfam" id="PF00989">
    <property type="entry name" value="PAS"/>
    <property type="match status" value="1"/>
</dbReference>
<dbReference type="Pfam" id="PF17203">
    <property type="entry name" value="sCache_3_2"/>
    <property type="match status" value="1"/>
</dbReference>
<dbReference type="Pfam" id="PF14689">
    <property type="entry name" value="SPOB_a"/>
    <property type="match status" value="1"/>
</dbReference>
<dbReference type="PRINTS" id="PR00344">
    <property type="entry name" value="BCTRLSENSOR"/>
</dbReference>
<dbReference type="SMART" id="SM00387">
    <property type="entry name" value="HATPase_c"/>
    <property type="match status" value="1"/>
</dbReference>
<dbReference type="SMART" id="SM00091">
    <property type="entry name" value="PAS"/>
    <property type="match status" value="1"/>
</dbReference>
<dbReference type="SUPFAM" id="SSF55874">
    <property type="entry name" value="ATPase domain of HSP90 chaperone/DNA topoisomerase II/histidine kinase"/>
    <property type="match status" value="1"/>
</dbReference>
<dbReference type="SUPFAM" id="SSF55785">
    <property type="entry name" value="PYP-like sensor domain (PAS domain)"/>
    <property type="match status" value="1"/>
</dbReference>
<dbReference type="SUPFAM" id="SSF103190">
    <property type="entry name" value="Sensory domain-like"/>
    <property type="match status" value="1"/>
</dbReference>
<dbReference type="SUPFAM" id="SSF55890">
    <property type="entry name" value="Sporulation response regulatory protein Spo0B"/>
    <property type="match status" value="1"/>
</dbReference>
<dbReference type="PROSITE" id="PS50109">
    <property type="entry name" value="HIS_KIN"/>
    <property type="match status" value="1"/>
</dbReference>
<dbReference type="PROSITE" id="PS50112">
    <property type="entry name" value="PAS"/>
    <property type="match status" value="1"/>
</dbReference>
<comment type="function">
    <text evidence="1">Member of the two-component regulatory system DcuR/DcuS. Involved in the C4-dicarboxylate-stimulated regulation of the genes encoding the anaerobic fumarate respiratory system (frdABCD; nuoAN; dcuB; sdhCDAB; etc.). Weakly regulates the aerobic C4-dicarboxylate transporter dctA. Activates DcuR by phosphorylation.</text>
</comment>
<comment type="catalytic activity">
    <reaction evidence="1">
        <text>ATP + protein L-histidine = ADP + protein N-phospho-L-histidine.</text>
        <dbReference type="EC" id="2.7.13.3"/>
    </reaction>
</comment>
<comment type="subunit">
    <text evidence="1">Homodimer.</text>
</comment>
<comment type="subcellular location">
    <subcellularLocation>
        <location evidence="1">Cell inner membrane</location>
        <topology evidence="2">Multi-pass membrane protein</topology>
    </subcellularLocation>
</comment>
<comment type="domain">
    <text evidence="1">The periplasmic domain is involved in C4-dicarboxylate binding and sensing. The structural disorder in the cytoplasmic PAS domain has an important role in signal transduction to the kinase domain and may be the decisive structural feature that characterizes the activated kinase.</text>
</comment>
<comment type="PTM">
    <text evidence="1">Autophosphorylated. The phosphoryl group is rapidly transferred to DcuR.</text>
</comment>
<organism>
    <name type="scientific">Shigella flexneri</name>
    <dbReference type="NCBI Taxonomy" id="623"/>
    <lineage>
        <taxon>Bacteria</taxon>
        <taxon>Pseudomonadati</taxon>
        <taxon>Pseudomonadota</taxon>
        <taxon>Gammaproteobacteria</taxon>
        <taxon>Enterobacterales</taxon>
        <taxon>Enterobacteriaceae</taxon>
        <taxon>Shigella</taxon>
    </lineage>
</organism>
<proteinExistence type="inferred from homology"/>
<name>DCUS_SHIFL</name>
<reference key="1">
    <citation type="journal article" date="2002" name="Nucleic Acids Res.">
        <title>Genome sequence of Shigella flexneri 2a: insights into pathogenicity through comparison with genomes of Escherichia coli K12 and O157.</title>
        <authorList>
            <person name="Jin Q."/>
            <person name="Yuan Z."/>
            <person name="Xu J."/>
            <person name="Wang Y."/>
            <person name="Shen Y."/>
            <person name="Lu W."/>
            <person name="Wang J."/>
            <person name="Liu H."/>
            <person name="Yang J."/>
            <person name="Yang F."/>
            <person name="Zhang X."/>
            <person name="Zhang J."/>
            <person name="Yang G."/>
            <person name="Wu H."/>
            <person name="Qu D."/>
            <person name="Dong J."/>
            <person name="Sun L."/>
            <person name="Xue Y."/>
            <person name="Zhao A."/>
            <person name="Gao Y."/>
            <person name="Zhu J."/>
            <person name="Kan B."/>
            <person name="Ding K."/>
            <person name="Chen S."/>
            <person name="Cheng H."/>
            <person name="Yao Z."/>
            <person name="He B."/>
            <person name="Chen R."/>
            <person name="Ma D."/>
            <person name="Qiang B."/>
            <person name="Wen Y."/>
            <person name="Hou Y."/>
            <person name="Yu J."/>
        </authorList>
    </citation>
    <scope>NUCLEOTIDE SEQUENCE [LARGE SCALE GENOMIC DNA]</scope>
    <source>
        <strain>301 / Serotype 2a</strain>
    </source>
</reference>
<reference key="2">
    <citation type="journal article" date="2003" name="Infect. Immun.">
        <title>Complete genome sequence and comparative genomics of Shigella flexneri serotype 2a strain 2457T.</title>
        <authorList>
            <person name="Wei J."/>
            <person name="Goldberg M.B."/>
            <person name="Burland V."/>
            <person name="Venkatesan M.M."/>
            <person name="Deng W."/>
            <person name="Fournier G."/>
            <person name="Mayhew G.F."/>
            <person name="Plunkett G. III"/>
            <person name="Rose D.J."/>
            <person name="Darling A."/>
            <person name="Mau B."/>
            <person name="Perna N.T."/>
            <person name="Payne S.M."/>
            <person name="Runyen-Janecky L.J."/>
            <person name="Zhou S."/>
            <person name="Schwartz D.C."/>
            <person name="Blattner F.R."/>
        </authorList>
    </citation>
    <scope>NUCLEOTIDE SEQUENCE [LARGE SCALE GENOMIC DNA]</scope>
    <source>
        <strain>ATCC 700930 / 2457T / Serotype 2a</strain>
    </source>
</reference>
<keyword id="KW-0067">ATP-binding</keyword>
<keyword id="KW-0997">Cell inner membrane</keyword>
<keyword id="KW-1003">Cell membrane</keyword>
<keyword id="KW-0418">Kinase</keyword>
<keyword id="KW-0472">Membrane</keyword>
<keyword id="KW-0547">Nucleotide-binding</keyword>
<keyword id="KW-0597">Phosphoprotein</keyword>
<keyword id="KW-1185">Reference proteome</keyword>
<keyword id="KW-0808">Transferase</keyword>
<keyword id="KW-0812">Transmembrane</keyword>
<keyword id="KW-1133">Transmembrane helix</keyword>
<keyword id="KW-0902">Two-component regulatory system</keyword>
<protein>
    <recommendedName>
        <fullName evidence="1">Sensor histidine kinase DcuS</fullName>
        <ecNumber evidence="1">2.7.13.3</ecNumber>
    </recommendedName>
</protein>